<gene>
    <name type="ordered locus">CNM01460</name>
</gene>
<dbReference type="EMBL" id="AE017353">
    <property type="protein sequence ID" value="AAW46936.1"/>
    <property type="molecule type" value="Genomic_DNA"/>
</dbReference>
<dbReference type="RefSeq" id="XP_568453.1">
    <property type="nucleotide sequence ID" value="XM_568453.2"/>
</dbReference>
<dbReference type="SMR" id="P0CR82"/>
<dbReference type="FunCoup" id="P0CR82">
    <property type="interactions" value="517"/>
</dbReference>
<dbReference type="STRING" id="214684.P0CR82"/>
<dbReference type="PaxDb" id="214684-P0CR82"/>
<dbReference type="EnsemblFungi" id="AAW46936">
    <property type="protein sequence ID" value="AAW46936"/>
    <property type="gene ID" value="CNM01460"/>
</dbReference>
<dbReference type="GeneID" id="3255250"/>
<dbReference type="KEGG" id="cne:CNM01460"/>
<dbReference type="VEuPathDB" id="FungiDB:CNM01460"/>
<dbReference type="eggNOG" id="KOG1727">
    <property type="taxonomic scope" value="Eukaryota"/>
</dbReference>
<dbReference type="HOGENOM" id="CLU_095877_0_0_1"/>
<dbReference type="InParanoid" id="P0CR82"/>
<dbReference type="OMA" id="CAMITEG"/>
<dbReference type="OrthoDB" id="10248936at2759"/>
<dbReference type="Proteomes" id="UP000002149">
    <property type="component" value="Chromosome 13"/>
</dbReference>
<dbReference type="GO" id="GO:0005737">
    <property type="term" value="C:cytoplasm"/>
    <property type="evidence" value="ECO:0000318"/>
    <property type="project" value="GO_Central"/>
</dbReference>
<dbReference type="GO" id="GO:0005874">
    <property type="term" value="C:microtubule"/>
    <property type="evidence" value="ECO:0007669"/>
    <property type="project" value="UniProtKB-KW"/>
</dbReference>
<dbReference type="GO" id="GO:0005509">
    <property type="term" value="F:calcium ion binding"/>
    <property type="evidence" value="ECO:0000318"/>
    <property type="project" value="GO_Central"/>
</dbReference>
<dbReference type="GO" id="GO:0006412">
    <property type="term" value="P:translation"/>
    <property type="evidence" value="ECO:0007669"/>
    <property type="project" value="UniProtKB-KW"/>
</dbReference>
<dbReference type="FunFam" id="2.170.150.10:FF:000002">
    <property type="entry name" value="Translationally-controlled tumor protein homolog"/>
    <property type="match status" value="1"/>
</dbReference>
<dbReference type="Gene3D" id="2.170.150.10">
    <property type="entry name" value="Metal Binding Protein, Guanine Nucleotide Exchange Factor, Chain A"/>
    <property type="match status" value="1"/>
</dbReference>
<dbReference type="InterPro" id="IPR011057">
    <property type="entry name" value="Mss4-like_sf"/>
</dbReference>
<dbReference type="InterPro" id="IPR011323">
    <property type="entry name" value="Mss4/transl-control_tumour"/>
</dbReference>
<dbReference type="InterPro" id="IPR034737">
    <property type="entry name" value="TCTP"/>
</dbReference>
<dbReference type="InterPro" id="IPR018103">
    <property type="entry name" value="Translation_control_tumour_CS"/>
</dbReference>
<dbReference type="InterPro" id="IPR018105">
    <property type="entry name" value="Translational_control_tumour_p"/>
</dbReference>
<dbReference type="PANTHER" id="PTHR11991">
    <property type="entry name" value="TRANSLATIONALLY CONTROLLED TUMOR PROTEIN-RELATED"/>
    <property type="match status" value="1"/>
</dbReference>
<dbReference type="PANTHER" id="PTHR11991:SF0">
    <property type="entry name" value="TRANSLATIONALLY-CONTROLLED TUMOR PROTEIN"/>
    <property type="match status" value="1"/>
</dbReference>
<dbReference type="Pfam" id="PF00838">
    <property type="entry name" value="TCTP"/>
    <property type="match status" value="1"/>
</dbReference>
<dbReference type="PRINTS" id="PR01653">
    <property type="entry name" value="TCTPROTEIN"/>
</dbReference>
<dbReference type="SUPFAM" id="SSF51316">
    <property type="entry name" value="Mss4-like"/>
    <property type="match status" value="1"/>
</dbReference>
<dbReference type="PROSITE" id="PS01002">
    <property type="entry name" value="TCTP_1"/>
    <property type="match status" value="1"/>
</dbReference>
<dbReference type="PROSITE" id="PS51797">
    <property type="entry name" value="TCTP_3"/>
    <property type="match status" value="1"/>
</dbReference>
<accession>P0CR82</accession>
<accession>Q55I87</accession>
<accession>Q5K7S2</accession>
<keyword id="KW-0963">Cytoplasm</keyword>
<keyword id="KW-0206">Cytoskeleton</keyword>
<keyword id="KW-0493">Microtubule</keyword>
<keyword id="KW-0648">Protein biosynthesis</keyword>
<keyword id="KW-1185">Reference proteome</keyword>
<evidence type="ECO:0000250" key="1"/>
<evidence type="ECO:0000255" key="2">
    <source>
        <dbReference type="PROSITE-ProRule" id="PRU01133"/>
    </source>
</evidence>
<proteinExistence type="inferred from homology"/>
<comment type="function">
    <text evidence="1">Involved in protein synthesis. Involved in microtubule stabilization (By similarity).</text>
</comment>
<comment type="subcellular location">
    <subcellularLocation>
        <location evidence="1">Cytoplasm</location>
        <location evidence="1">Cytoskeleton</location>
    </subcellularLocation>
</comment>
<comment type="similarity">
    <text evidence="2">Belongs to the TCTP family.</text>
</comment>
<organism>
    <name type="scientific">Cryptococcus neoformans var. neoformans serotype D (strain JEC21 / ATCC MYA-565)</name>
    <name type="common">Filobasidiella neoformans</name>
    <dbReference type="NCBI Taxonomy" id="214684"/>
    <lineage>
        <taxon>Eukaryota</taxon>
        <taxon>Fungi</taxon>
        <taxon>Dikarya</taxon>
        <taxon>Basidiomycota</taxon>
        <taxon>Agaricomycotina</taxon>
        <taxon>Tremellomycetes</taxon>
        <taxon>Tremellales</taxon>
        <taxon>Cryptococcaceae</taxon>
        <taxon>Cryptococcus</taxon>
        <taxon>Cryptococcus neoformans species complex</taxon>
    </lineage>
</organism>
<feature type="chain" id="PRO_0000252321" description="Translationally-controlled tumor protein homolog">
    <location>
        <begin position="1"/>
        <end position="167"/>
    </location>
</feature>
<feature type="domain" description="TCTP" evidence="2">
    <location>
        <begin position="1"/>
        <end position="167"/>
    </location>
</feature>
<name>TCTP_CRYNJ</name>
<protein>
    <recommendedName>
        <fullName>Translationally-controlled tumor protein homolog</fullName>
        <shortName>TCTP</shortName>
    </recommendedName>
</protein>
<sequence length="167" mass="18763">MLIYQDVLTGDEMISDAFPIKEIGDIAYEVDCANIIIKEGDVDIGGNPSAEEAAEALEEGAQQVNNVVHSFRLQSTSFDKKSYLTYLKGYMKAIKSKLQESNPDRVAAFEKGAQDFAKKIVANFKDYEFYIGESMNPDGMVCLLNYREDGVTPYFTMWKDGLKEIKI</sequence>
<reference key="1">
    <citation type="journal article" date="2005" name="Science">
        <title>The genome of the basidiomycetous yeast and human pathogen Cryptococcus neoformans.</title>
        <authorList>
            <person name="Loftus B.J."/>
            <person name="Fung E."/>
            <person name="Roncaglia P."/>
            <person name="Rowley D."/>
            <person name="Amedeo P."/>
            <person name="Bruno D."/>
            <person name="Vamathevan J."/>
            <person name="Miranda M."/>
            <person name="Anderson I.J."/>
            <person name="Fraser J.A."/>
            <person name="Allen J.E."/>
            <person name="Bosdet I.E."/>
            <person name="Brent M.R."/>
            <person name="Chiu R."/>
            <person name="Doering T.L."/>
            <person name="Donlin M.J."/>
            <person name="D'Souza C.A."/>
            <person name="Fox D.S."/>
            <person name="Grinberg V."/>
            <person name="Fu J."/>
            <person name="Fukushima M."/>
            <person name="Haas B.J."/>
            <person name="Huang J.C."/>
            <person name="Janbon G."/>
            <person name="Jones S.J.M."/>
            <person name="Koo H.L."/>
            <person name="Krzywinski M.I."/>
            <person name="Kwon-Chung K.J."/>
            <person name="Lengeler K.B."/>
            <person name="Maiti R."/>
            <person name="Marra M.A."/>
            <person name="Marra R.E."/>
            <person name="Mathewson C.A."/>
            <person name="Mitchell T.G."/>
            <person name="Pertea M."/>
            <person name="Riggs F.R."/>
            <person name="Salzberg S.L."/>
            <person name="Schein J.E."/>
            <person name="Shvartsbeyn A."/>
            <person name="Shin H."/>
            <person name="Shumway M."/>
            <person name="Specht C.A."/>
            <person name="Suh B.B."/>
            <person name="Tenney A."/>
            <person name="Utterback T.R."/>
            <person name="Wickes B.L."/>
            <person name="Wortman J.R."/>
            <person name="Wye N.H."/>
            <person name="Kronstad J.W."/>
            <person name="Lodge J.K."/>
            <person name="Heitman J."/>
            <person name="Davis R.W."/>
            <person name="Fraser C.M."/>
            <person name="Hyman R.W."/>
        </authorList>
    </citation>
    <scope>NUCLEOTIDE SEQUENCE [LARGE SCALE GENOMIC DNA]</scope>
    <source>
        <strain>JEC21 / ATCC MYA-565</strain>
    </source>
</reference>